<comment type="function">
    <text evidence="1">NDH-1 shuttles electrons from NADH, via FMN and iron-sulfur (Fe-S) centers, to quinones in the respiratory chain. The immediate electron acceptor for the enzyme in this species is believed to be ubiquinone. Couples the redox reaction to proton translocation (for every two electrons transferred, four hydrogen ions are translocated across the cytoplasmic membrane), and thus conserves the redox energy in a proton gradient.</text>
</comment>
<comment type="catalytic activity">
    <reaction evidence="1">
        <text>a quinone + NADH + 5 H(+)(in) = a quinol + NAD(+) + 4 H(+)(out)</text>
        <dbReference type="Rhea" id="RHEA:57888"/>
        <dbReference type="ChEBI" id="CHEBI:15378"/>
        <dbReference type="ChEBI" id="CHEBI:24646"/>
        <dbReference type="ChEBI" id="CHEBI:57540"/>
        <dbReference type="ChEBI" id="CHEBI:57945"/>
        <dbReference type="ChEBI" id="CHEBI:132124"/>
    </reaction>
</comment>
<comment type="subunit">
    <text evidence="1">NDH-1 is composed of 14 different subunits. Subunits NuoA, H, J, K, L, M, N constitute the membrane sector of the complex.</text>
</comment>
<comment type="subcellular location">
    <subcellularLocation>
        <location evidence="1">Cell inner membrane</location>
        <topology evidence="1">Multi-pass membrane protein</topology>
    </subcellularLocation>
</comment>
<comment type="similarity">
    <text evidence="1">Belongs to the complex I subunit 2 family.</text>
</comment>
<name>NUON1_KORVE</name>
<protein>
    <recommendedName>
        <fullName evidence="1">NADH-quinone oxidoreductase subunit N 1</fullName>
        <ecNumber evidence="1">7.1.1.-</ecNumber>
    </recommendedName>
    <alternativeName>
        <fullName evidence="1">NADH dehydrogenase I subunit N 1</fullName>
    </alternativeName>
    <alternativeName>
        <fullName evidence="1">NDH-1 subunit N 1</fullName>
    </alternativeName>
</protein>
<evidence type="ECO:0000255" key="1">
    <source>
        <dbReference type="HAMAP-Rule" id="MF_00445"/>
    </source>
</evidence>
<keyword id="KW-0997">Cell inner membrane</keyword>
<keyword id="KW-1003">Cell membrane</keyword>
<keyword id="KW-0472">Membrane</keyword>
<keyword id="KW-0520">NAD</keyword>
<keyword id="KW-0874">Quinone</keyword>
<keyword id="KW-1185">Reference proteome</keyword>
<keyword id="KW-1278">Translocase</keyword>
<keyword id="KW-0812">Transmembrane</keyword>
<keyword id="KW-1133">Transmembrane helix</keyword>
<keyword id="KW-0813">Transport</keyword>
<keyword id="KW-0830">Ubiquinone</keyword>
<sequence length="511" mass="55709">MTSLPNLLSRSDYLLALPMLVLSGFAVAILLLDLVLPKGWKRWNAALALAGLAAATMSLAKVWQAVYYIETPESKRFSGFLGSLVMDRFAIYFYLLFIVGAAVAILMSIRYMEIEHEDHGEYHALILFATIGMMCMASGMDLILLFVGLELMALSTYVLVGFLKRDKRSNEAALKYLLLGAFSSGIFAYGLSLFYGLTGSTNLTEIANKLAQRMADNPRDPIALLALITTATGLLFKIAAVPFHQWAPDAYEGAPTAVTGFMSVAVKAAGWAMLLRIFLFMLWPMREQYTPILIFVAVATMIGGNFAALTQTNVKRLLAYSSISHVGYMLLGLVASDGKNSSTGIKGILVYLAVYTFMNLGAFAVITSLRRRDIIGDELDDLAGLFFKAPSEAVLLLVFLLSLAGIPPLAGFWGKYYIFLSLMETGHYTLAVVAVLFAVLGMYYYLRIANAAFMREAVDAEPVKISPSLGAALWISALGTLGIGLFPEVFLRIVNWSLALSGDARVIGLLR</sequence>
<gene>
    <name evidence="1" type="primary">nuoN1</name>
    <name type="ordered locus">Acid345_1296</name>
</gene>
<proteinExistence type="inferred from homology"/>
<reference key="1">
    <citation type="journal article" date="2009" name="Appl. Environ. Microbiol.">
        <title>Three genomes from the phylum Acidobacteria provide insight into the lifestyles of these microorganisms in soils.</title>
        <authorList>
            <person name="Ward N.L."/>
            <person name="Challacombe J.F."/>
            <person name="Janssen P.H."/>
            <person name="Henrissat B."/>
            <person name="Coutinho P.M."/>
            <person name="Wu M."/>
            <person name="Xie G."/>
            <person name="Haft D.H."/>
            <person name="Sait M."/>
            <person name="Badger J."/>
            <person name="Barabote R.D."/>
            <person name="Bradley B."/>
            <person name="Brettin T.S."/>
            <person name="Brinkac L.M."/>
            <person name="Bruce D."/>
            <person name="Creasy T."/>
            <person name="Daugherty S.C."/>
            <person name="Davidsen T.M."/>
            <person name="DeBoy R.T."/>
            <person name="Detter J.C."/>
            <person name="Dodson R.J."/>
            <person name="Durkin A.S."/>
            <person name="Ganapathy A."/>
            <person name="Gwinn-Giglio M."/>
            <person name="Han C.S."/>
            <person name="Khouri H."/>
            <person name="Kiss H."/>
            <person name="Kothari S.P."/>
            <person name="Madupu R."/>
            <person name="Nelson K.E."/>
            <person name="Nelson W.C."/>
            <person name="Paulsen I."/>
            <person name="Penn K."/>
            <person name="Ren Q."/>
            <person name="Rosovitz M.J."/>
            <person name="Selengut J.D."/>
            <person name="Shrivastava S."/>
            <person name="Sullivan S.A."/>
            <person name="Tapia R."/>
            <person name="Thompson L.S."/>
            <person name="Watkins K.L."/>
            <person name="Yang Q."/>
            <person name="Yu C."/>
            <person name="Zafar N."/>
            <person name="Zhou L."/>
            <person name="Kuske C.R."/>
        </authorList>
    </citation>
    <scope>NUCLEOTIDE SEQUENCE [LARGE SCALE GENOMIC DNA]</scope>
    <source>
        <strain>Ellin345</strain>
    </source>
</reference>
<feature type="chain" id="PRO_5000121133" description="NADH-quinone oxidoreductase subunit N 1">
    <location>
        <begin position="1"/>
        <end position="511"/>
    </location>
</feature>
<feature type="transmembrane region" description="Helical" evidence="1">
    <location>
        <begin position="15"/>
        <end position="35"/>
    </location>
</feature>
<feature type="transmembrane region" description="Helical" evidence="1">
    <location>
        <begin position="46"/>
        <end position="66"/>
    </location>
</feature>
<feature type="transmembrane region" description="Helical" evidence="1">
    <location>
        <begin position="89"/>
        <end position="109"/>
    </location>
</feature>
<feature type="transmembrane region" description="Helical" evidence="1">
    <location>
        <begin position="120"/>
        <end position="140"/>
    </location>
</feature>
<feature type="transmembrane region" description="Helical" evidence="1">
    <location>
        <begin position="142"/>
        <end position="162"/>
    </location>
</feature>
<feature type="transmembrane region" description="Helical" evidence="1">
    <location>
        <begin position="177"/>
        <end position="197"/>
    </location>
</feature>
<feature type="transmembrane region" description="Helical" evidence="1">
    <location>
        <begin position="221"/>
        <end position="241"/>
    </location>
</feature>
<feature type="transmembrane region" description="Helical" evidence="1">
    <location>
        <begin position="264"/>
        <end position="284"/>
    </location>
</feature>
<feature type="transmembrane region" description="Helical" evidence="1">
    <location>
        <begin position="289"/>
        <end position="309"/>
    </location>
</feature>
<feature type="transmembrane region" description="Helical" evidence="1">
    <location>
        <begin position="317"/>
        <end position="337"/>
    </location>
</feature>
<feature type="transmembrane region" description="Helical" evidence="1">
    <location>
        <begin position="347"/>
        <end position="367"/>
    </location>
</feature>
<feature type="transmembrane region" description="Helical" evidence="1">
    <location>
        <begin position="393"/>
        <end position="413"/>
    </location>
</feature>
<feature type="transmembrane region" description="Helical" evidence="1">
    <location>
        <begin position="426"/>
        <end position="446"/>
    </location>
</feature>
<feature type="transmembrane region" description="Helical" evidence="1">
    <location>
        <begin position="471"/>
        <end position="491"/>
    </location>
</feature>
<dbReference type="EC" id="7.1.1.-" evidence="1"/>
<dbReference type="EMBL" id="CP000360">
    <property type="protein sequence ID" value="ABF40298.1"/>
    <property type="molecule type" value="Genomic_DNA"/>
</dbReference>
<dbReference type="RefSeq" id="WP_011522100.1">
    <property type="nucleotide sequence ID" value="NC_008009.1"/>
</dbReference>
<dbReference type="SMR" id="Q1IS52"/>
<dbReference type="STRING" id="204669.Acid345_1296"/>
<dbReference type="EnsemblBacteria" id="ABF40298">
    <property type="protein sequence ID" value="ABF40298"/>
    <property type="gene ID" value="Acid345_1296"/>
</dbReference>
<dbReference type="KEGG" id="aba:Acid345_1296"/>
<dbReference type="eggNOG" id="COG1007">
    <property type="taxonomic scope" value="Bacteria"/>
</dbReference>
<dbReference type="HOGENOM" id="CLU_007100_1_5_0"/>
<dbReference type="OrthoDB" id="9807568at2"/>
<dbReference type="Proteomes" id="UP000002432">
    <property type="component" value="Chromosome"/>
</dbReference>
<dbReference type="GO" id="GO:0005886">
    <property type="term" value="C:plasma membrane"/>
    <property type="evidence" value="ECO:0007669"/>
    <property type="project" value="UniProtKB-SubCell"/>
</dbReference>
<dbReference type="GO" id="GO:0008137">
    <property type="term" value="F:NADH dehydrogenase (ubiquinone) activity"/>
    <property type="evidence" value="ECO:0007669"/>
    <property type="project" value="InterPro"/>
</dbReference>
<dbReference type="GO" id="GO:0050136">
    <property type="term" value="F:NADH:ubiquinone reductase (non-electrogenic) activity"/>
    <property type="evidence" value="ECO:0007669"/>
    <property type="project" value="UniProtKB-UniRule"/>
</dbReference>
<dbReference type="GO" id="GO:0048038">
    <property type="term" value="F:quinone binding"/>
    <property type="evidence" value="ECO:0007669"/>
    <property type="project" value="UniProtKB-KW"/>
</dbReference>
<dbReference type="GO" id="GO:0042773">
    <property type="term" value="P:ATP synthesis coupled electron transport"/>
    <property type="evidence" value="ECO:0007669"/>
    <property type="project" value="InterPro"/>
</dbReference>
<dbReference type="HAMAP" id="MF_00445">
    <property type="entry name" value="NDH1_NuoN_1"/>
    <property type="match status" value="1"/>
</dbReference>
<dbReference type="InterPro" id="IPR010096">
    <property type="entry name" value="NADH-Q_OxRdtase_suN/2"/>
</dbReference>
<dbReference type="InterPro" id="IPR001750">
    <property type="entry name" value="ND/Mrp_TM"/>
</dbReference>
<dbReference type="NCBIfam" id="TIGR01770">
    <property type="entry name" value="NDH_I_N"/>
    <property type="match status" value="1"/>
</dbReference>
<dbReference type="PANTHER" id="PTHR22773">
    <property type="entry name" value="NADH DEHYDROGENASE"/>
    <property type="match status" value="1"/>
</dbReference>
<dbReference type="Pfam" id="PF00361">
    <property type="entry name" value="Proton_antipo_M"/>
    <property type="match status" value="1"/>
</dbReference>
<dbReference type="PRINTS" id="PR01434">
    <property type="entry name" value="NADHDHGNASE5"/>
</dbReference>
<accession>Q1IS52</accession>
<organism>
    <name type="scientific">Koribacter versatilis (strain Ellin345)</name>
    <dbReference type="NCBI Taxonomy" id="204669"/>
    <lineage>
        <taxon>Bacteria</taxon>
        <taxon>Pseudomonadati</taxon>
        <taxon>Acidobacteriota</taxon>
        <taxon>Terriglobia</taxon>
        <taxon>Terriglobales</taxon>
        <taxon>Candidatus Korobacteraceae</taxon>
        <taxon>Candidatus Korobacter</taxon>
    </lineage>
</organism>